<gene>
    <name evidence="1" type="primary">rsmG</name>
    <name type="ordered locus">SynRCC307_1946</name>
</gene>
<organism>
    <name type="scientific">Synechococcus sp. (strain RCC307)</name>
    <dbReference type="NCBI Taxonomy" id="316278"/>
    <lineage>
        <taxon>Bacteria</taxon>
        <taxon>Bacillati</taxon>
        <taxon>Cyanobacteriota</taxon>
        <taxon>Cyanophyceae</taxon>
        <taxon>Synechococcales</taxon>
        <taxon>Synechococcaceae</taxon>
        <taxon>Synechococcus</taxon>
    </lineage>
</organism>
<protein>
    <recommendedName>
        <fullName evidence="1">Ribosomal RNA small subunit methyltransferase G</fullName>
        <ecNumber evidence="1">2.1.1.-</ecNumber>
    </recommendedName>
    <alternativeName>
        <fullName evidence="1">16S rRNA 7-methylguanosine methyltransferase</fullName>
        <shortName evidence="1">16S rRNA m7G methyltransferase</shortName>
    </alternativeName>
</protein>
<proteinExistence type="inferred from homology"/>
<evidence type="ECO:0000255" key="1">
    <source>
        <dbReference type="HAMAP-Rule" id="MF_00074"/>
    </source>
</evidence>
<dbReference type="EC" id="2.1.1.-" evidence="1"/>
<dbReference type="EMBL" id="CT978603">
    <property type="protein sequence ID" value="CAK28849.1"/>
    <property type="molecule type" value="Genomic_DNA"/>
</dbReference>
<dbReference type="SMR" id="A5GVE0"/>
<dbReference type="STRING" id="316278.SynRCC307_1946"/>
<dbReference type="KEGG" id="syr:SynRCC307_1946"/>
<dbReference type="eggNOG" id="COG0357">
    <property type="taxonomic scope" value="Bacteria"/>
</dbReference>
<dbReference type="HOGENOM" id="CLU_065341_0_2_3"/>
<dbReference type="OrthoDB" id="9808773at2"/>
<dbReference type="Proteomes" id="UP000001115">
    <property type="component" value="Chromosome"/>
</dbReference>
<dbReference type="GO" id="GO:0005829">
    <property type="term" value="C:cytosol"/>
    <property type="evidence" value="ECO:0007669"/>
    <property type="project" value="TreeGrafter"/>
</dbReference>
<dbReference type="GO" id="GO:0070043">
    <property type="term" value="F:rRNA (guanine-N7-)-methyltransferase activity"/>
    <property type="evidence" value="ECO:0007669"/>
    <property type="project" value="UniProtKB-UniRule"/>
</dbReference>
<dbReference type="Gene3D" id="3.40.50.150">
    <property type="entry name" value="Vaccinia Virus protein VP39"/>
    <property type="match status" value="1"/>
</dbReference>
<dbReference type="HAMAP" id="MF_00074">
    <property type="entry name" value="16SrRNA_methyltr_G"/>
    <property type="match status" value="1"/>
</dbReference>
<dbReference type="InterPro" id="IPR003682">
    <property type="entry name" value="rRNA_ssu_MeTfrase_G"/>
</dbReference>
<dbReference type="InterPro" id="IPR029063">
    <property type="entry name" value="SAM-dependent_MTases_sf"/>
</dbReference>
<dbReference type="NCBIfam" id="TIGR00138">
    <property type="entry name" value="rsmG_gidB"/>
    <property type="match status" value="1"/>
</dbReference>
<dbReference type="PANTHER" id="PTHR31760">
    <property type="entry name" value="S-ADENOSYL-L-METHIONINE-DEPENDENT METHYLTRANSFERASES SUPERFAMILY PROTEIN"/>
    <property type="match status" value="1"/>
</dbReference>
<dbReference type="PANTHER" id="PTHR31760:SF0">
    <property type="entry name" value="S-ADENOSYL-L-METHIONINE-DEPENDENT METHYLTRANSFERASES SUPERFAMILY PROTEIN"/>
    <property type="match status" value="1"/>
</dbReference>
<dbReference type="Pfam" id="PF02527">
    <property type="entry name" value="GidB"/>
    <property type="match status" value="1"/>
</dbReference>
<dbReference type="PIRSF" id="PIRSF003078">
    <property type="entry name" value="GidB"/>
    <property type="match status" value="1"/>
</dbReference>
<dbReference type="SUPFAM" id="SSF53335">
    <property type="entry name" value="S-adenosyl-L-methionine-dependent methyltransferases"/>
    <property type="match status" value="1"/>
</dbReference>
<feature type="chain" id="PRO_1000057512" description="Ribosomal RNA small subunit methyltransferase G">
    <location>
        <begin position="1"/>
        <end position="237"/>
    </location>
</feature>
<feature type="binding site" evidence="1">
    <location>
        <position position="75"/>
    </location>
    <ligand>
        <name>S-adenosyl-L-methionine</name>
        <dbReference type="ChEBI" id="CHEBI:59789"/>
    </ligand>
</feature>
<feature type="binding site" evidence="1">
    <location>
        <position position="80"/>
    </location>
    <ligand>
        <name>S-adenosyl-L-methionine</name>
        <dbReference type="ChEBI" id="CHEBI:59789"/>
    </ligand>
</feature>
<feature type="binding site" evidence="1">
    <location>
        <begin position="127"/>
        <end position="128"/>
    </location>
    <ligand>
        <name>S-adenosyl-L-methionine</name>
        <dbReference type="ChEBI" id="CHEBI:59789"/>
    </ligand>
</feature>
<feature type="binding site" evidence="1">
    <location>
        <position position="146"/>
    </location>
    <ligand>
        <name>S-adenosyl-L-methionine</name>
        <dbReference type="ChEBI" id="CHEBI:59789"/>
    </ligand>
</feature>
<name>RSMG_SYNR3</name>
<comment type="function">
    <text evidence="1">Specifically methylates the N7 position of a guanine in 16S rRNA.</text>
</comment>
<comment type="subcellular location">
    <subcellularLocation>
        <location evidence="1">Cytoplasm</location>
    </subcellularLocation>
</comment>
<comment type="similarity">
    <text evidence="1">Belongs to the methyltransferase superfamily. RNA methyltransferase RsmG family.</text>
</comment>
<sequence>MSSTAPWDQLTWQPSSDQLQQFNRLQELLREWNGKVNLTRLVEGEDYWISQIFDSLWPLQPWLSKGEPLKVIDVGTGGGFPGLAIAIALPQAQLTLVDSVGRKVQAVQAMADALGLTERVQLRCERAEKTGRDPHCRRQFQLAVARAVAAAPVVAEYLVPLLSADGTALLYRGQWSDEDQRQLQRAAAQLNSSTETIQVQELPAERGLRHVIPLRPQGVCPKQYPRAVGVPAKLPLA</sequence>
<reference key="1">
    <citation type="submission" date="2006-05" db="EMBL/GenBank/DDBJ databases">
        <authorList>
            <consortium name="Genoscope"/>
        </authorList>
    </citation>
    <scope>NUCLEOTIDE SEQUENCE [LARGE SCALE GENOMIC DNA]</scope>
    <source>
        <strain>RCC307</strain>
    </source>
</reference>
<keyword id="KW-0963">Cytoplasm</keyword>
<keyword id="KW-0489">Methyltransferase</keyword>
<keyword id="KW-1185">Reference proteome</keyword>
<keyword id="KW-0698">rRNA processing</keyword>
<keyword id="KW-0949">S-adenosyl-L-methionine</keyword>
<keyword id="KW-0808">Transferase</keyword>
<accession>A5GVE0</accession>